<comment type="similarity">
    <text evidence="1">Belongs to the herpesviridae UL92 family.</text>
</comment>
<protein>
    <recommendedName>
        <fullName>Protein U63</fullName>
    </recommendedName>
</protein>
<feature type="chain" id="PRO_0000408172" description="Protein U63">
    <location>
        <begin position="1"/>
        <end position="197"/>
    </location>
</feature>
<sequence length="197" mass="23102">MEECLHNMMLLHNPLTHELNIKNLYICTMCGFSHVCNEESSNCKILETSEGVVCLYTGLTHLERFPCIINICPNDSDHDTIDIDYMNTVQSILRRVFVFFKTYEFKYVHVTNEIFTENEFKPHVLTAVITTFRRVFTSQKLIDKVSIFTISKLFIQLLIGKYAKQTTYDTNVIKVSKRKREDTLLKQMRYEYGNSSL</sequence>
<accession>Q18LD5</accession>
<reference key="1">
    <citation type="journal article" date="2007" name="J. Virol.">
        <title>Identification of novel rodent herpesviruses, including the first gammaherpesvirus of Mus musculus.</title>
        <authorList>
            <person name="Ehlers B."/>
            <person name="Kuchler J."/>
            <person name="Yasmum N."/>
            <person name="Dural G."/>
            <person name="Voigt S."/>
            <person name="Schmidt-Chanasit J."/>
            <person name="Jakel T."/>
            <person name="Matuschka F.R."/>
            <person name="Richter D."/>
            <person name="Essbauer S."/>
            <person name="Hughes D.J."/>
            <person name="Summers C."/>
            <person name="Bennett M."/>
            <person name="Stewart J.P."/>
            <person name="Ulrich R.G."/>
        </authorList>
    </citation>
    <scope>NUCLEOTIDE SEQUENCE [GENOMIC DNA]</scope>
</reference>
<reference key="2">
    <citation type="journal article" date="2001" name="J. Gen. Virol.">
        <title>Genetic and ultrastructural characterization of a European isolate of the fatal endotheliotropic elephant herpesvirus.</title>
        <authorList>
            <person name="Ehlers B."/>
            <person name="Burkhardt S."/>
            <person name="Goltz M."/>
            <person name="Bergmann V."/>
            <person name="Ochs A."/>
            <person name="Weiler H."/>
            <person name="Hentschke J."/>
        </authorList>
    </citation>
    <scope>NUCLEOTIDE SEQUENCE [GENOMIC DNA]</scope>
</reference>
<organismHost>
    <name type="scientific">Elephas maximus</name>
    <name type="common">Indian elephant</name>
    <dbReference type="NCBI Taxonomy" id="9783"/>
</organismHost>
<organismHost>
    <name type="scientific">Loxodonta africana</name>
    <name type="common">African elephant</name>
    <dbReference type="NCBI Taxonomy" id="9785"/>
</organismHost>
<organismHost>
    <name type="scientific">Loxodonta cyclotis</name>
    <name type="common">African forest elephant</name>
    <dbReference type="NCBI Taxonomy" id="99490"/>
</organismHost>
<organism>
    <name type="scientific">Elephantid herpesvirus 1 (isolate Asian elephant/Berlin/Kiba/1998)</name>
    <name type="common">EIHV-1</name>
    <name type="synonym">Elephant endotheliotropic herpesvirus</name>
    <dbReference type="NCBI Taxonomy" id="654902"/>
    <lineage>
        <taxon>Viruses</taxon>
        <taxon>Duplodnaviria</taxon>
        <taxon>Heunggongvirae</taxon>
        <taxon>Peploviricota</taxon>
        <taxon>Herviviricetes</taxon>
        <taxon>Herpesvirales</taxon>
        <taxon>Orthoherpesviridae</taxon>
        <taxon>Betaherpesvirinae</taxon>
        <taxon>Proboscivirus</taxon>
        <taxon>Proboscivirus elephantidbeta1</taxon>
        <taxon>Elephantid herpesvirus 1</taxon>
    </lineage>
</organism>
<evidence type="ECO:0000305" key="1"/>
<proteinExistence type="inferred from homology"/>
<dbReference type="EMBL" id="AF322977">
    <property type="protein sequence ID" value="ABG36584.1"/>
    <property type="molecule type" value="Genomic_DNA"/>
</dbReference>
<dbReference type="SMR" id="Q18LD5"/>
<dbReference type="InterPro" id="IPR004289">
    <property type="entry name" value="Herpes_UL92"/>
</dbReference>
<dbReference type="Pfam" id="PF03048">
    <property type="entry name" value="Herpes_UL92"/>
    <property type="match status" value="1"/>
</dbReference>
<name>UL92_ELHVK</name>